<organism>
    <name type="scientific">Tamias sibiricus</name>
    <name type="common">Siberian chipmunk</name>
    <name type="synonym">Eutamias sibiricus</name>
    <dbReference type="NCBI Taxonomy" id="64680"/>
    <lineage>
        <taxon>Eukaryota</taxon>
        <taxon>Metazoa</taxon>
        <taxon>Chordata</taxon>
        <taxon>Craniata</taxon>
        <taxon>Vertebrata</taxon>
        <taxon>Euteleostomi</taxon>
        <taxon>Mammalia</taxon>
        <taxon>Eutheria</taxon>
        <taxon>Euarchontoglires</taxon>
        <taxon>Glires</taxon>
        <taxon>Rodentia</taxon>
        <taxon>Sciuromorpha</taxon>
        <taxon>Sciuridae</taxon>
        <taxon>Xerinae</taxon>
        <taxon>Marmotini</taxon>
        <taxon>Tamias</taxon>
    </lineage>
</organism>
<proteinExistence type="evidence at protein level"/>
<feature type="signal peptide" evidence="4">
    <location>
        <begin position="1"/>
        <end position="30"/>
    </location>
</feature>
<feature type="chain" id="PRO_0000003560" description="Hibernation-associated plasma protein HP-27">
    <location>
        <begin position="31"/>
        <end position="215"/>
    </location>
</feature>
<feature type="domain" description="Collagen-like">
    <location>
        <begin position="43"/>
        <end position="81"/>
    </location>
</feature>
<feature type="domain" description="C1q" evidence="2">
    <location>
        <begin position="85"/>
        <end position="215"/>
    </location>
</feature>
<feature type="region of interest" description="Disordered" evidence="3">
    <location>
        <begin position="34"/>
        <end position="79"/>
    </location>
</feature>
<feature type="compositionally biased region" description="Pro residues" evidence="3">
    <location>
        <begin position="44"/>
        <end position="63"/>
    </location>
</feature>
<feature type="glycosylation site" description="N-linked (GlcNAc...) asparagine" evidence="1">
    <location>
        <position position="155"/>
    </location>
</feature>
<feature type="sequence conflict" description="In Ref. 2; AA sequence." evidence="5" ref="2">
    <original>V</original>
    <variation>A</variation>
    <location>
        <position position="41"/>
    </location>
</feature>
<feature type="sequence conflict" description="In Ref. 2; AA sequence." evidence="5" ref="2">
    <original>R</original>
    <variation>Q</variation>
    <location>
        <position position="51"/>
    </location>
</feature>
<protein>
    <recommendedName>
        <fullName>Hibernation-associated plasma protein HP-27</fullName>
    </recommendedName>
    <alternativeName>
        <fullName>Hibernator-specific blood complex 27 kDa subunit</fullName>
    </alternativeName>
</protein>
<name>HP27_TAMSI</name>
<reference key="1">
    <citation type="journal article" date="1993" name="Mol. Cell. Biol.">
        <title>Hibernation-associated gene regulation of plasma proteins with a collagen-like domain in mammalian hibernators.</title>
        <authorList>
            <person name="Takamatsu N."/>
            <person name="Ohba K."/>
            <person name="Kondo J."/>
            <person name="Kondo N."/>
            <person name="Shiba T."/>
        </authorList>
    </citation>
    <scope>NUCLEOTIDE SEQUENCE [MRNA]</scope>
    <source>
        <tissue>Liver</tissue>
    </source>
</reference>
<reference key="2">
    <citation type="journal article" date="1992" name="J. Biol. Chem.">
        <title>Identification of novel blood proteins specific for mammalian hibernation.</title>
        <authorList>
            <person name="Kondo N."/>
            <person name="Kondo J."/>
        </authorList>
    </citation>
    <scope>PROTEIN SEQUENCE OF 31-215</scope>
    <source>
        <tissue>Plasma</tissue>
    </source>
</reference>
<keyword id="KW-0176">Collagen</keyword>
<keyword id="KW-0903">Direct protein sequencing</keyword>
<keyword id="KW-0325">Glycoprotein</keyword>
<keyword id="KW-0909">Hibernation</keyword>
<keyword id="KW-0964">Secreted</keyword>
<keyword id="KW-0732">Signal</keyword>
<comment type="function">
    <text>Plasma proteins HP-20, HP-25, HP-27 and HP-55 form a 140 kDa complex via disulfide bonds in the plasma and are hibernation specific.</text>
</comment>
<comment type="subcellular location">
    <subcellularLocation>
        <location>Secreted</location>
    </subcellularLocation>
</comment>
<comment type="tissue specificity">
    <text>Plasma; synthesized in the liver.</text>
</comment>
<comment type="developmental stage">
    <text>The protein complex disappears from the plasma at onset of hibernation and reappears as hibernation ceases.</text>
</comment>
<accession>Q06577</accession>
<dbReference type="EMBL" id="D12976">
    <property type="protein sequence ID" value="BAA02353.1"/>
    <property type="molecule type" value="mRNA"/>
</dbReference>
<dbReference type="PIR" id="C48150">
    <property type="entry name" value="C48150"/>
</dbReference>
<dbReference type="SMR" id="Q06577"/>
<dbReference type="GO" id="GO:0005581">
    <property type="term" value="C:collagen trimer"/>
    <property type="evidence" value="ECO:0007669"/>
    <property type="project" value="UniProtKB-KW"/>
</dbReference>
<dbReference type="GO" id="GO:0005576">
    <property type="term" value="C:extracellular region"/>
    <property type="evidence" value="ECO:0007669"/>
    <property type="project" value="UniProtKB-SubCell"/>
</dbReference>
<dbReference type="GO" id="GO:0042750">
    <property type="term" value="P:hibernation"/>
    <property type="evidence" value="ECO:0007669"/>
    <property type="project" value="UniProtKB-KW"/>
</dbReference>
<dbReference type="Gene3D" id="2.60.120.40">
    <property type="match status" value="1"/>
</dbReference>
<dbReference type="InterPro" id="IPR001073">
    <property type="entry name" value="C1q_dom"/>
</dbReference>
<dbReference type="InterPro" id="IPR008160">
    <property type="entry name" value="Collagen"/>
</dbReference>
<dbReference type="InterPro" id="IPR050392">
    <property type="entry name" value="Collagen/C1q_domain"/>
</dbReference>
<dbReference type="InterPro" id="IPR008983">
    <property type="entry name" value="Tumour_necrosis_fac-like_dom"/>
</dbReference>
<dbReference type="PANTHER" id="PTHR15427">
    <property type="entry name" value="EMILIN ELASTIN MICROFIBRIL INTERFACE-LOCATED PROTEIN ELASTIN MICROFIBRIL INTERFACER"/>
    <property type="match status" value="1"/>
</dbReference>
<dbReference type="PANTHER" id="PTHR15427:SF34">
    <property type="entry name" value="PROTEIN HP-25 HOMOLOG 2"/>
    <property type="match status" value="1"/>
</dbReference>
<dbReference type="Pfam" id="PF00386">
    <property type="entry name" value="C1q"/>
    <property type="match status" value="1"/>
</dbReference>
<dbReference type="Pfam" id="PF01391">
    <property type="entry name" value="Collagen"/>
    <property type="match status" value="1"/>
</dbReference>
<dbReference type="PRINTS" id="PR00007">
    <property type="entry name" value="COMPLEMNTC1Q"/>
</dbReference>
<dbReference type="SMART" id="SM00110">
    <property type="entry name" value="C1Q"/>
    <property type="match status" value="1"/>
</dbReference>
<dbReference type="SUPFAM" id="SSF49842">
    <property type="entry name" value="TNF-like"/>
    <property type="match status" value="1"/>
</dbReference>
<dbReference type="PROSITE" id="PS50871">
    <property type="entry name" value="C1Q"/>
    <property type="match status" value="1"/>
</dbReference>
<evidence type="ECO:0000255" key="1"/>
<evidence type="ECO:0000255" key="2">
    <source>
        <dbReference type="PROSITE-ProRule" id="PRU00368"/>
    </source>
</evidence>
<evidence type="ECO:0000256" key="3">
    <source>
        <dbReference type="SAM" id="MobiDB-lite"/>
    </source>
</evidence>
<evidence type="ECO:0000269" key="4">
    <source>
    </source>
</evidence>
<evidence type="ECO:0000305" key="5"/>
<sequence length="215" mass="22797">MYEAGKRASFMGGAGIWILALSVLMHVVCSETQGNPESCNVPGPQGPPGMRGPPGTPGKPGPPGWNGFPGLPGPPGPPGMTVNCHSKGTSAFAVKANELPPAPSQPVIFKEALHDAQGHFDLATGVFTCPVPGLYQFGFHIEAVQRAVKVSLMRNGTQVMEREAEAQDGYEHISGTAILQLGMEDRVWLENKLSQTDLERGTVQAVFSGFLIHEN</sequence>